<dbReference type="EC" id="6.3.2.1" evidence="1"/>
<dbReference type="EMBL" id="CP000230">
    <property type="protein sequence ID" value="ABC24114.1"/>
    <property type="status" value="ALT_INIT"/>
    <property type="molecule type" value="Genomic_DNA"/>
</dbReference>
<dbReference type="RefSeq" id="WP_011391067.1">
    <property type="nucleotide sequence ID" value="NC_007643.1"/>
</dbReference>
<dbReference type="RefSeq" id="YP_428401.1">
    <property type="nucleotide sequence ID" value="NC_007643.1"/>
</dbReference>
<dbReference type="SMR" id="Q2RP31"/>
<dbReference type="STRING" id="269796.Rru_A3320"/>
<dbReference type="EnsemblBacteria" id="ABC24114">
    <property type="protein sequence ID" value="ABC24114"/>
    <property type="gene ID" value="Rru_A3320"/>
</dbReference>
<dbReference type="KEGG" id="rru:Rru_A3320"/>
<dbReference type="PATRIC" id="fig|269796.9.peg.3433"/>
<dbReference type="eggNOG" id="COG0414">
    <property type="taxonomic scope" value="Bacteria"/>
</dbReference>
<dbReference type="HOGENOM" id="CLU_047148_0_0_5"/>
<dbReference type="UniPathway" id="UPA00028">
    <property type="reaction ID" value="UER00005"/>
</dbReference>
<dbReference type="Proteomes" id="UP000001929">
    <property type="component" value="Chromosome"/>
</dbReference>
<dbReference type="GO" id="GO:0005829">
    <property type="term" value="C:cytosol"/>
    <property type="evidence" value="ECO:0007669"/>
    <property type="project" value="TreeGrafter"/>
</dbReference>
<dbReference type="GO" id="GO:0005524">
    <property type="term" value="F:ATP binding"/>
    <property type="evidence" value="ECO:0007669"/>
    <property type="project" value="UniProtKB-KW"/>
</dbReference>
<dbReference type="GO" id="GO:0004592">
    <property type="term" value="F:pantoate-beta-alanine ligase activity"/>
    <property type="evidence" value="ECO:0007669"/>
    <property type="project" value="UniProtKB-UniRule"/>
</dbReference>
<dbReference type="GO" id="GO:0015940">
    <property type="term" value="P:pantothenate biosynthetic process"/>
    <property type="evidence" value="ECO:0007669"/>
    <property type="project" value="UniProtKB-UniRule"/>
</dbReference>
<dbReference type="CDD" id="cd00560">
    <property type="entry name" value="PanC"/>
    <property type="match status" value="1"/>
</dbReference>
<dbReference type="FunFam" id="3.40.50.620:FF:000114">
    <property type="entry name" value="Pantothenate synthetase"/>
    <property type="match status" value="1"/>
</dbReference>
<dbReference type="Gene3D" id="3.40.50.620">
    <property type="entry name" value="HUPs"/>
    <property type="match status" value="1"/>
</dbReference>
<dbReference type="Gene3D" id="3.30.1300.10">
    <property type="entry name" value="Pantoate-beta-alanine ligase, C-terminal domain"/>
    <property type="match status" value="1"/>
</dbReference>
<dbReference type="HAMAP" id="MF_00158">
    <property type="entry name" value="PanC"/>
    <property type="match status" value="1"/>
</dbReference>
<dbReference type="InterPro" id="IPR004821">
    <property type="entry name" value="Cyt_trans-like"/>
</dbReference>
<dbReference type="InterPro" id="IPR003721">
    <property type="entry name" value="Pantoate_ligase"/>
</dbReference>
<dbReference type="InterPro" id="IPR042176">
    <property type="entry name" value="Pantoate_ligase_C"/>
</dbReference>
<dbReference type="InterPro" id="IPR014729">
    <property type="entry name" value="Rossmann-like_a/b/a_fold"/>
</dbReference>
<dbReference type="NCBIfam" id="TIGR00125">
    <property type="entry name" value="cyt_tran_rel"/>
    <property type="match status" value="1"/>
</dbReference>
<dbReference type="NCBIfam" id="TIGR00018">
    <property type="entry name" value="panC"/>
    <property type="match status" value="1"/>
</dbReference>
<dbReference type="PANTHER" id="PTHR21299">
    <property type="entry name" value="CYTIDYLATE KINASE/PANTOATE-BETA-ALANINE LIGASE"/>
    <property type="match status" value="1"/>
</dbReference>
<dbReference type="PANTHER" id="PTHR21299:SF1">
    <property type="entry name" value="PANTOATE--BETA-ALANINE LIGASE"/>
    <property type="match status" value="1"/>
</dbReference>
<dbReference type="Pfam" id="PF02569">
    <property type="entry name" value="Pantoate_ligase"/>
    <property type="match status" value="1"/>
</dbReference>
<dbReference type="SUPFAM" id="SSF52374">
    <property type="entry name" value="Nucleotidylyl transferase"/>
    <property type="match status" value="1"/>
</dbReference>
<proteinExistence type="inferred from homology"/>
<organism>
    <name type="scientific">Rhodospirillum rubrum (strain ATCC 11170 / ATH 1.1.1 / DSM 467 / LMG 4362 / NCIMB 8255 / S1)</name>
    <dbReference type="NCBI Taxonomy" id="269796"/>
    <lineage>
        <taxon>Bacteria</taxon>
        <taxon>Pseudomonadati</taxon>
        <taxon>Pseudomonadota</taxon>
        <taxon>Alphaproteobacteria</taxon>
        <taxon>Rhodospirillales</taxon>
        <taxon>Rhodospirillaceae</taxon>
        <taxon>Rhodospirillum</taxon>
    </lineage>
</organism>
<keyword id="KW-0067">ATP-binding</keyword>
<keyword id="KW-0963">Cytoplasm</keyword>
<keyword id="KW-0436">Ligase</keyword>
<keyword id="KW-0547">Nucleotide-binding</keyword>
<keyword id="KW-0566">Pantothenate biosynthesis</keyword>
<keyword id="KW-1185">Reference proteome</keyword>
<reference key="1">
    <citation type="journal article" date="2011" name="Stand. Genomic Sci.">
        <title>Complete genome sequence of Rhodospirillum rubrum type strain (S1).</title>
        <authorList>
            <person name="Munk A.C."/>
            <person name="Copeland A."/>
            <person name="Lucas S."/>
            <person name="Lapidus A."/>
            <person name="Del Rio T.G."/>
            <person name="Barry K."/>
            <person name="Detter J.C."/>
            <person name="Hammon N."/>
            <person name="Israni S."/>
            <person name="Pitluck S."/>
            <person name="Brettin T."/>
            <person name="Bruce D."/>
            <person name="Han C."/>
            <person name="Tapia R."/>
            <person name="Gilna P."/>
            <person name="Schmutz J."/>
            <person name="Larimer F."/>
            <person name="Land M."/>
            <person name="Kyrpides N.C."/>
            <person name="Mavromatis K."/>
            <person name="Richardson P."/>
            <person name="Rohde M."/>
            <person name="Goeker M."/>
            <person name="Klenk H.P."/>
            <person name="Zhang Y."/>
            <person name="Roberts G.P."/>
            <person name="Reslewic S."/>
            <person name="Schwartz D.C."/>
        </authorList>
    </citation>
    <scope>NUCLEOTIDE SEQUENCE [LARGE SCALE GENOMIC DNA]</scope>
    <source>
        <strain>ATCC 11170 / ATH 1.1.1 / DSM 467 / LMG 4362 / NCIMB 8255 / S1</strain>
    </source>
</reference>
<protein>
    <recommendedName>
        <fullName evidence="1">Pantothenate synthetase</fullName>
        <shortName evidence="1">PS</shortName>
        <ecNumber evidence="1">6.3.2.1</ecNumber>
    </recommendedName>
    <alternativeName>
        <fullName evidence="1">Pantoate--beta-alanine ligase</fullName>
    </alternativeName>
    <alternativeName>
        <fullName evidence="1">Pantoate-activating enzyme</fullName>
    </alternativeName>
</protein>
<accession>Q2RP31</accession>
<feature type="chain" id="PRO_0000305537" description="Pantothenate synthetase">
    <location>
        <begin position="1"/>
        <end position="282"/>
    </location>
</feature>
<feature type="active site" description="Proton donor" evidence="1">
    <location>
        <position position="40"/>
    </location>
</feature>
<feature type="binding site" evidence="1">
    <location>
        <begin position="33"/>
        <end position="40"/>
    </location>
    <ligand>
        <name>ATP</name>
        <dbReference type="ChEBI" id="CHEBI:30616"/>
    </ligand>
</feature>
<feature type="binding site" evidence="1">
    <location>
        <position position="64"/>
    </location>
    <ligand>
        <name>(R)-pantoate</name>
        <dbReference type="ChEBI" id="CHEBI:15980"/>
    </ligand>
</feature>
<feature type="binding site" evidence="1">
    <location>
        <position position="64"/>
    </location>
    <ligand>
        <name>beta-alanine</name>
        <dbReference type="ChEBI" id="CHEBI:57966"/>
    </ligand>
</feature>
<feature type="binding site" evidence="1">
    <location>
        <begin position="150"/>
        <end position="153"/>
    </location>
    <ligand>
        <name>ATP</name>
        <dbReference type="ChEBI" id="CHEBI:30616"/>
    </ligand>
</feature>
<feature type="binding site" evidence="1">
    <location>
        <position position="156"/>
    </location>
    <ligand>
        <name>(R)-pantoate</name>
        <dbReference type="ChEBI" id="CHEBI:15980"/>
    </ligand>
</feature>
<feature type="binding site" evidence="1">
    <location>
        <position position="179"/>
    </location>
    <ligand>
        <name>ATP</name>
        <dbReference type="ChEBI" id="CHEBI:30616"/>
    </ligand>
</feature>
<feature type="binding site" evidence="1">
    <location>
        <begin position="187"/>
        <end position="190"/>
    </location>
    <ligand>
        <name>ATP</name>
        <dbReference type="ChEBI" id="CHEBI:30616"/>
    </ligand>
</feature>
<sequence length="282" mass="29896">MRALPIARSVSELRAVVDGWKAEGLRVGLVPTMGALHAGHLSLVRLALSKVDRVVASVFVNPTQFGPNEDFAAYPRDEAADAAKLGGAGAHLLYAPDVAGMYPPGFSTTITVSGVSSGLCGDLRPGHFQGVATVVAKLFLRVRPDVAVFGEKDYQQLLVLKRLVNDLDLAIEVIGAPIVRETDGLALSSRNAYLSAEQRALAPGLYRTLRRVGADILGGGRVDDCLAWGIDELKALGFGPVDYLDLRDGATLERLDDAPEGPGRLLCAAYLGKTRLIDNIGV</sequence>
<gene>
    <name evidence="1" type="primary">panC</name>
    <name type="ordered locus">Rru_A3320</name>
</gene>
<evidence type="ECO:0000255" key="1">
    <source>
        <dbReference type="HAMAP-Rule" id="MF_00158"/>
    </source>
</evidence>
<evidence type="ECO:0000305" key="2"/>
<name>PANC_RHORT</name>
<comment type="function">
    <text evidence="1">Catalyzes the condensation of pantoate with beta-alanine in an ATP-dependent reaction via a pantoyl-adenylate intermediate.</text>
</comment>
<comment type="catalytic activity">
    <reaction evidence="1">
        <text>(R)-pantoate + beta-alanine + ATP = (R)-pantothenate + AMP + diphosphate + H(+)</text>
        <dbReference type="Rhea" id="RHEA:10912"/>
        <dbReference type="ChEBI" id="CHEBI:15378"/>
        <dbReference type="ChEBI" id="CHEBI:15980"/>
        <dbReference type="ChEBI" id="CHEBI:29032"/>
        <dbReference type="ChEBI" id="CHEBI:30616"/>
        <dbReference type="ChEBI" id="CHEBI:33019"/>
        <dbReference type="ChEBI" id="CHEBI:57966"/>
        <dbReference type="ChEBI" id="CHEBI:456215"/>
        <dbReference type="EC" id="6.3.2.1"/>
    </reaction>
</comment>
<comment type="pathway">
    <text evidence="1">Cofactor biosynthesis; (R)-pantothenate biosynthesis; (R)-pantothenate from (R)-pantoate and beta-alanine: step 1/1.</text>
</comment>
<comment type="subunit">
    <text evidence="1">Homodimer.</text>
</comment>
<comment type="subcellular location">
    <subcellularLocation>
        <location evidence="1">Cytoplasm</location>
    </subcellularLocation>
</comment>
<comment type="miscellaneous">
    <text evidence="1">The reaction proceeds by a bi uni uni bi ping pong mechanism.</text>
</comment>
<comment type="similarity">
    <text evidence="1">Belongs to the pantothenate synthetase family.</text>
</comment>
<comment type="sequence caution" evidence="2">
    <conflict type="erroneous initiation">
        <sequence resource="EMBL-CDS" id="ABC24114"/>
    </conflict>
</comment>